<feature type="chain" id="PRO_0000406465" description="Transcription activator of gluconeogenesis ERT1">
    <location>
        <begin position="1"/>
        <end position="468"/>
    </location>
</feature>
<feature type="domain" description="PAS">
    <location>
        <begin position="349"/>
        <end position="422"/>
    </location>
</feature>
<feature type="DNA-binding region" description="Zn(2)-C6 fungal-type" evidence="2">
    <location>
        <begin position="63"/>
        <end position="91"/>
    </location>
</feature>
<evidence type="ECO:0000250" key="1"/>
<evidence type="ECO:0000255" key="2">
    <source>
        <dbReference type="PROSITE-ProRule" id="PRU00227"/>
    </source>
</evidence>
<evidence type="ECO:0000305" key="3"/>
<gene>
    <name type="primary">ERT1</name>
    <name type="ORF">PGUG_01894</name>
</gene>
<name>ERT1_PICGU</name>
<protein>
    <recommendedName>
        <fullName>Transcription activator of gluconeogenesis ERT1</fullName>
    </recommendedName>
</protein>
<keyword id="KW-0010">Activator</keyword>
<keyword id="KW-0238">DNA-binding</keyword>
<keyword id="KW-0312">Gluconeogenesis</keyword>
<keyword id="KW-0479">Metal-binding</keyword>
<keyword id="KW-0539">Nucleus</keyword>
<keyword id="KW-1185">Reference proteome</keyword>
<keyword id="KW-0804">Transcription</keyword>
<keyword id="KW-0805">Transcription regulation</keyword>
<keyword id="KW-0862">Zinc</keyword>
<comment type="function">
    <text evidence="1">Transcription factor which regulates nonfermentable carbon utilization. Activator of gluconeogenetic genes (By similarity).</text>
</comment>
<comment type="subcellular location">
    <subcellularLocation>
        <location evidence="2">Nucleus</location>
    </subcellularLocation>
</comment>
<comment type="similarity">
    <text evidence="3">Belongs to the ERT1/acuK family.</text>
</comment>
<reference key="1">
    <citation type="journal article" date="2009" name="Nature">
        <title>Evolution of pathogenicity and sexual reproduction in eight Candida genomes.</title>
        <authorList>
            <person name="Butler G."/>
            <person name="Rasmussen M.D."/>
            <person name="Lin M.F."/>
            <person name="Santos M.A.S."/>
            <person name="Sakthikumar S."/>
            <person name="Munro C.A."/>
            <person name="Rheinbay E."/>
            <person name="Grabherr M."/>
            <person name="Forche A."/>
            <person name="Reedy J.L."/>
            <person name="Agrafioti I."/>
            <person name="Arnaud M.B."/>
            <person name="Bates S."/>
            <person name="Brown A.J.P."/>
            <person name="Brunke S."/>
            <person name="Costanzo M.C."/>
            <person name="Fitzpatrick D.A."/>
            <person name="de Groot P.W.J."/>
            <person name="Harris D."/>
            <person name="Hoyer L.L."/>
            <person name="Hube B."/>
            <person name="Klis F.M."/>
            <person name="Kodira C."/>
            <person name="Lennard N."/>
            <person name="Logue M.E."/>
            <person name="Martin R."/>
            <person name="Neiman A.M."/>
            <person name="Nikolaou E."/>
            <person name="Quail M.A."/>
            <person name="Quinn J."/>
            <person name="Santos M.C."/>
            <person name="Schmitzberger F.F."/>
            <person name="Sherlock G."/>
            <person name="Shah P."/>
            <person name="Silverstein K.A.T."/>
            <person name="Skrzypek M.S."/>
            <person name="Soll D."/>
            <person name="Staggs R."/>
            <person name="Stansfield I."/>
            <person name="Stumpf M.P.H."/>
            <person name="Sudbery P.E."/>
            <person name="Srikantha T."/>
            <person name="Zeng Q."/>
            <person name="Berman J."/>
            <person name="Berriman M."/>
            <person name="Heitman J."/>
            <person name="Gow N.A.R."/>
            <person name="Lorenz M.C."/>
            <person name="Birren B.W."/>
            <person name="Kellis M."/>
            <person name="Cuomo C.A."/>
        </authorList>
    </citation>
    <scope>NUCLEOTIDE SEQUENCE [LARGE SCALE GENOMIC DNA]</scope>
    <source>
        <strain>ATCC 6260 / CBS 566 / DSM 6381 / JCM 1539 / NBRC 10279 / NRRL Y-324</strain>
    </source>
</reference>
<sequence>MSAPAEAGQRPVSTPVFRFKLNKVSAYGALNSLIVFRIIFLLKNPLFLMFTNKQKRKKTIRACTHCHRAHLLCDENRPCARCVQKGLQATCQDAPRKRKKYLLDVPPDSMQKQRYQSPEIKPEYPMNTLLPLPGQQIQRKSNFLSSAADMEYSTLSNILSENVHPFPNPSTSNEGTPNSITLSPALSPGTGGRTSTTYTAPTDIACDNALNQYVLGPTTTGISLYPDVVMAIETLKNTHPSVIHERNTRSTVSYAMGFMPDGNPHVSLPGGDYASVYAEPEDIYAKVRKPYSYTPGYHALIAYLRSRFPKQMLVKMAESMAAYRPSFIACTNALKEDDLIFMEQCFQRTLLTYDNFIKLSGTPTIVWRRTGEIAYVGDEFCVLTGWPKAELITQKKRLIVELLDDKSVVEYFELFSKIAFGDFLGATMTECTLLTSKPDVKIRTSCIWTLKRDVFGIPMMIIGNFLPI</sequence>
<proteinExistence type="inferred from homology"/>
<accession>A5DF43</accession>
<dbReference type="EMBL" id="CH408156">
    <property type="protein sequence ID" value="EDK37796.2"/>
    <property type="molecule type" value="Genomic_DNA"/>
</dbReference>
<dbReference type="RefSeq" id="XP_001486223.1">
    <property type="nucleotide sequence ID" value="XM_001486173.1"/>
</dbReference>
<dbReference type="FunCoup" id="A5DF43">
    <property type="interactions" value="267"/>
</dbReference>
<dbReference type="GeneID" id="5128027"/>
<dbReference type="KEGG" id="pgu:PGUG_01894"/>
<dbReference type="VEuPathDB" id="FungiDB:PGUG_01894"/>
<dbReference type="eggNOG" id="ENOG502R1M5">
    <property type="taxonomic scope" value="Eukaryota"/>
</dbReference>
<dbReference type="HOGENOM" id="CLU_010748_2_3_1"/>
<dbReference type="InParanoid" id="A5DF43"/>
<dbReference type="OMA" id="VMTTCKL"/>
<dbReference type="OrthoDB" id="2538135at2759"/>
<dbReference type="Proteomes" id="UP000001997">
    <property type="component" value="Unassembled WGS sequence"/>
</dbReference>
<dbReference type="GO" id="GO:0005634">
    <property type="term" value="C:nucleus"/>
    <property type="evidence" value="ECO:0007669"/>
    <property type="project" value="UniProtKB-SubCell"/>
</dbReference>
<dbReference type="GO" id="GO:0001227">
    <property type="term" value="F:DNA-binding transcription repressor activity, RNA polymerase II-specific"/>
    <property type="evidence" value="ECO:0007669"/>
    <property type="project" value="EnsemblFungi"/>
</dbReference>
<dbReference type="GO" id="GO:0000977">
    <property type="term" value="F:RNA polymerase II transcription regulatory region sequence-specific DNA binding"/>
    <property type="evidence" value="ECO:0007669"/>
    <property type="project" value="TreeGrafter"/>
</dbReference>
<dbReference type="GO" id="GO:0008270">
    <property type="term" value="F:zinc ion binding"/>
    <property type="evidence" value="ECO:0007669"/>
    <property type="project" value="InterPro"/>
</dbReference>
<dbReference type="GO" id="GO:0045991">
    <property type="term" value="P:carbon catabolite activation of transcription"/>
    <property type="evidence" value="ECO:0007669"/>
    <property type="project" value="EnsemblFungi"/>
</dbReference>
<dbReference type="GO" id="GO:0045013">
    <property type="term" value="P:carbon catabolite repression of transcription"/>
    <property type="evidence" value="ECO:0007669"/>
    <property type="project" value="EnsemblFungi"/>
</dbReference>
<dbReference type="GO" id="GO:0009267">
    <property type="term" value="P:cellular response to starvation"/>
    <property type="evidence" value="ECO:0007669"/>
    <property type="project" value="TreeGrafter"/>
</dbReference>
<dbReference type="GO" id="GO:0006094">
    <property type="term" value="P:gluconeogenesis"/>
    <property type="evidence" value="ECO:0007669"/>
    <property type="project" value="UniProtKB-KW"/>
</dbReference>
<dbReference type="GO" id="GO:0045722">
    <property type="term" value="P:positive regulation of gluconeogenesis"/>
    <property type="evidence" value="ECO:0007669"/>
    <property type="project" value="EnsemblFungi"/>
</dbReference>
<dbReference type="GO" id="GO:0045944">
    <property type="term" value="P:positive regulation of transcription by RNA polymerase II"/>
    <property type="evidence" value="ECO:0007669"/>
    <property type="project" value="EnsemblFungi"/>
</dbReference>
<dbReference type="CDD" id="cd00067">
    <property type="entry name" value="GAL4"/>
    <property type="match status" value="1"/>
</dbReference>
<dbReference type="CDD" id="cd00130">
    <property type="entry name" value="PAS"/>
    <property type="match status" value="1"/>
</dbReference>
<dbReference type="Gene3D" id="4.10.240.10">
    <property type="entry name" value="Zn(2)-C6 fungal-type DNA-binding domain"/>
    <property type="match status" value="1"/>
</dbReference>
<dbReference type="InterPro" id="IPR050335">
    <property type="entry name" value="ERT1_acuK_gluconeogen_tf"/>
</dbReference>
<dbReference type="InterPro" id="IPR000014">
    <property type="entry name" value="PAS"/>
</dbReference>
<dbReference type="InterPro" id="IPR056751">
    <property type="entry name" value="PAS_13"/>
</dbReference>
<dbReference type="InterPro" id="IPR036864">
    <property type="entry name" value="Zn2-C6_fun-type_DNA-bd_sf"/>
</dbReference>
<dbReference type="InterPro" id="IPR001138">
    <property type="entry name" value="Zn2Cys6_DnaBD"/>
</dbReference>
<dbReference type="PANTHER" id="PTHR47659:SF1">
    <property type="entry name" value="TRANSCRIPTION ACTIVATOR OF GLUCONEOGENESIS ERT1"/>
    <property type="match status" value="1"/>
</dbReference>
<dbReference type="PANTHER" id="PTHR47659">
    <property type="entry name" value="ZN(II)2CYS6 TRANSCRIPTION FACTOR (EUROFUNG)-RELATED"/>
    <property type="match status" value="1"/>
</dbReference>
<dbReference type="Pfam" id="PF24990">
    <property type="entry name" value="PAS_13"/>
    <property type="match status" value="2"/>
</dbReference>
<dbReference type="Pfam" id="PF00172">
    <property type="entry name" value="Zn_clus"/>
    <property type="match status" value="1"/>
</dbReference>
<dbReference type="SMART" id="SM00066">
    <property type="entry name" value="GAL4"/>
    <property type="match status" value="1"/>
</dbReference>
<dbReference type="SUPFAM" id="SSF57701">
    <property type="entry name" value="Zn2/Cys6 DNA-binding domain"/>
    <property type="match status" value="1"/>
</dbReference>
<dbReference type="PROSITE" id="PS00463">
    <property type="entry name" value="ZN2_CY6_FUNGAL_1"/>
    <property type="match status" value="1"/>
</dbReference>
<dbReference type="PROSITE" id="PS50048">
    <property type="entry name" value="ZN2_CY6_FUNGAL_2"/>
    <property type="match status" value="1"/>
</dbReference>
<organism>
    <name type="scientific">Meyerozyma guilliermondii (strain ATCC 6260 / CBS 566 / DSM 6381 / JCM 1539 / NBRC 10279 / NRRL Y-324)</name>
    <name type="common">Yeast</name>
    <name type="synonym">Candida guilliermondii</name>
    <dbReference type="NCBI Taxonomy" id="294746"/>
    <lineage>
        <taxon>Eukaryota</taxon>
        <taxon>Fungi</taxon>
        <taxon>Dikarya</taxon>
        <taxon>Ascomycota</taxon>
        <taxon>Saccharomycotina</taxon>
        <taxon>Pichiomycetes</taxon>
        <taxon>Debaryomycetaceae</taxon>
        <taxon>Meyerozyma</taxon>
    </lineage>
</organism>